<name>GUF1_PHYIT</name>
<sequence>MLAVRRRGLRVLAVAPLRVRGLATTSTEFMEGEALTPKTVGPYMSERLEEFRPERIRNFSIVAHIDHGKSTLADRLLESSGNISRQERESAQFLDNLKVERERGITVKAQTASMLHRDSKTGESFMLNLVDTPGHVDFSYEVNRSLSACEGVLLLVDCSQGIQAQTLATYYAAKERNLHVVPVLTKIDMPHAEVDDSILSLSSLLDVDPDEVLLTSAKSGDGINDVLPAVVERLPPPVECDPAAPLRCLLVDSYYDDYRGTVCLVKVVDGAISPGDKIYSAHQKTKHDVQETGLLLPGRYKTKGLYAGQVGYIIAGMKSTTEAKVGDTFFREGAASADLKALPGFQEARSMVFASMYPTDDSSFDELRVAIEKLTLNDASVTAQQETSGALGMGFRCGFLGLLHMEVFHQRLSDEQGIQVMVTAPMVPYTVIDPNGEHLTVETPGAFPESTKYYEILEPMVEASIITPASYLGPVLALAKEKRGVQTNLVYLEDERIIVTIDVPWQEVVTNFYNELKTISSGYATLNYREIEPQKADIVKVDLLINGKVLDALSFVCHRSRATPDGRALCQKLKRVIDRQQYEISIQAALGGKIFAKERIAPYRKDVLIKSGKTVGGGDSTRKKKLLAKQKQGKRRMRTVANVQLSQDAFWSVLSK</sequence>
<accession>D0NKK0</accession>
<reference key="1">
    <citation type="journal article" date="2009" name="Nature">
        <title>Genome sequence and analysis of the Irish potato famine pathogen Phytophthora infestans.</title>
        <authorList>
            <consortium name="The Broad Institute Genome Sequencing Platform"/>
            <person name="Haas B.J."/>
            <person name="Kamoun S."/>
            <person name="Zody M.C."/>
            <person name="Jiang R.H."/>
            <person name="Handsaker R.E."/>
            <person name="Cano L.M."/>
            <person name="Grabherr M."/>
            <person name="Kodira C.D."/>
            <person name="Raffaele S."/>
            <person name="Torto-Alalibo T."/>
            <person name="Bozkurt T.O."/>
            <person name="Ah-Fong A.M."/>
            <person name="Alvarado L."/>
            <person name="Anderson V.L."/>
            <person name="Armstrong M.R."/>
            <person name="Avrova A."/>
            <person name="Baxter L."/>
            <person name="Beynon J."/>
            <person name="Boevink P.C."/>
            <person name="Bollmann S.R."/>
            <person name="Bos J.I."/>
            <person name="Bulone V."/>
            <person name="Cai G."/>
            <person name="Cakir C."/>
            <person name="Carrington J.C."/>
            <person name="Chawner M."/>
            <person name="Conti L."/>
            <person name="Costanzo S."/>
            <person name="Ewan R."/>
            <person name="Fahlgren N."/>
            <person name="Fischbach M.A."/>
            <person name="Fugelstad J."/>
            <person name="Gilroy E.M."/>
            <person name="Gnerre S."/>
            <person name="Green P.J."/>
            <person name="Grenville-Briggs L.J."/>
            <person name="Griffith J."/>
            <person name="Grunwald N.J."/>
            <person name="Horn K."/>
            <person name="Horner N.R."/>
            <person name="Hu C.H."/>
            <person name="Huitema E."/>
            <person name="Jeong D.H."/>
            <person name="Jones A.M."/>
            <person name="Jones J.D."/>
            <person name="Jones R.W."/>
            <person name="Karlsson E.K."/>
            <person name="Kunjeti S.G."/>
            <person name="Lamour K."/>
            <person name="Liu Z."/>
            <person name="Ma L."/>
            <person name="Maclean D."/>
            <person name="Chibucos M.C."/>
            <person name="McDonald H."/>
            <person name="McWalters J."/>
            <person name="Meijer H.J."/>
            <person name="Morgan W."/>
            <person name="Morris P.F."/>
            <person name="Munro C.A."/>
            <person name="O'Neill K."/>
            <person name="Ospina-Giraldo M."/>
            <person name="Pinzon A."/>
            <person name="Pritchard L."/>
            <person name="Ramsahoye B."/>
            <person name="Ren Q."/>
            <person name="Restrepo S."/>
            <person name="Roy S."/>
            <person name="Sadanandom A."/>
            <person name="Savidor A."/>
            <person name="Schornack S."/>
            <person name="Schwartz D.C."/>
            <person name="Schumann U.D."/>
            <person name="Schwessinger B."/>
            <person name="Seyer L."/>
            <person name="Sharpe T."/>
            <person name="Silvar C."/>
            <person name="Song J."/>
            <person name="Studholme D.J."/>
            <person name="Sykes S."/>
            <person name="Thines M."/>
            <person name="van de Vondervoort P.J."/>
            <person name="Phuntumart V."/>
            <person name="Wawra S."/>
            <person name="Weide R."/>
            <person name="Win J."/>
            <person name="Young C."/>
            <person name="Zhou S."/>
            <person name="Fry W."/>
            <person name="Meyers B.C."/>
            <person name="van West P."/>
            <person name="Ristaino J."/>
            <person name="Govers F."/>
            <person name="Birch P.R."/>
            <person name="Whisson S.C."/>
            <person name="Judelson H.S."/>
            <person name="Nusbaum C."/>
        </authorList>
    </citation>
    <scope>NUCLEOTIDE SEQUENCE [LARGE SCALE GENOMIC DNA]</scope>
    <source>
        <strain>T30-4</strain>
    </source>
</reference>
<dbReference type="EC" id="3.6.5.-"/>
<dbReference type="EMBL" id="DS028143">
    <property type="protein sequence ID" value="EEY60136.1"/>
    <property type="molecule type" value="Genomic_DNA"/>
</dbReference>
<dbReference type="RefSeq" id="XP_002900343.1">
    <property type="nucleotide sequence ID" value="XM_002900297.1"/>
</dbReference>
<dbReference type="SMR" id="D0NKK0"/>
<dbReference type="FunCoup" id="D0NKK0">
    <property type="interactions" value="255"/>
</dbReference>
<dbReference type="STRING" id="403677.D0NKK0"/>
<dbReference type="EnsemblProtists" id="PITG_12454T0">
    <property type="protein sequence ID" value="PITG_12454T0"/>
    <property type="gene ID" value="PITG_12454"/>
</dbReference>
<dbReference type="GeneID" id="9478287"/>
<dbReference type="KEGG" id="pif:PITG_12454"/>
<dbReference type="VEuPathDB" id="FungiDB:PITG_12454"/>
<dbReference type="eggNOG" id="KOG0462">
    <property type="taxonomic scope" value="Eukaryota"/>
</dbReference>
<dbReference type="HOGENOM" id="CLU_009995_3_3_1"/>
<dbReference type="InParanoid" id="D0NKK0"/>
<dbReference type="OMA" id="QVKCDEN"/>
<dbReference type="OrthoDB" id="1074at2759"/>
<dbReference type="Proteomes" id="UP000006643">
    <property type="component" value="Partially assembled WGS sequence"/>
</dbReference>
<dbReference type="GO" id="GO:0005743">
    <property type="term" value="C:mitochondrial inner membrane"/>
    <property type="evidence" value="ECO:0007669"/>
    <property type="project" value="UniProtKB-SubCell"/>
</dbReference>
<dbReference type="GO" id="GO:0005759">
    <property type="term" value="C:mitochondrial matrix"/>
    <property type="evidence" value="ECO:0007669"/>
    <property type="project" value="UniProtKB-UniRule"/>
</dbReference>
<dbReference type="GO" id="GO:0005525">
    <property type="term" value="F:GTP binding"/>
    <property type="evidence" value="ECO:0007669"/>
    <property type="project" value="UniProtKB-UniRule"/>
</dbReference>
<dbReference type="GO" id="GO:0003924">
    <property type="term" value="F:GTPase activity"/>
    <property type="evidence" value="ECO:0007669"/>
    <property type="project" value="UniProtKB-UniRule"/>
</dbReference>
<dbReference type="GO" id="GO:0097177">
    <property type="term" value="F:mitochondrial ribosome binding"/>
    <property type="evidence" value="ECO:0007669"/>
    <property type="project" value="TreeGrafter"/>
</dbReference>
<dbReference type="GO" id="GO:0045727">
    <property type="term" value="P:positive regulation of translation"/>
    <property type="evidence" value="ECO:0007669"/>
    <property type="project" value="UniProtKB-UniRule"/>
</dbReference>
<dbReference type="GO" id="GO:0006412">
    <property type="term" value="P:translation"/>
    <property type="evidence" value="ECO:0007669"/>
    <property type="project" value="UniProtKB-KW"/>
</dbReference>
<dbReference type="CDD" id="cd03699">
    <property type="entry name" value="EF4_II"/>
    <property type="match status" value="1"/>
</dbReference>
<dbReference type="CDD" id="cd16260">
    <property type="entry name" value="EF4_III"/>
    <property type="match status" value="1"/>
</dbReference>
<dbReference type="CDD" id="cd01890">
    <property type="entry name" value="LepA"/>
    <property type="match status" value="1"/>
</dbReference>
<dbReference type="CDD" id="cd03709">
    <property type="entry name" value="lepA_C"/>
    <property type="match status" value="1"/>
</dbReference>
<dbReference type="FunFam" id="3.30.70.240:FF:000020">
    <property type="entry name" value="Translation factor GUF1 homolog, mitochondrial"/>
    <property type="match status" value="1"/>
</dbReference>
<dbReference type="FunFam" id="3.40.50.300:FF:001496">
    <property type="entry name" value="Translation factor GUF1 homolog, mitochondrial"/>
    <property type="match status" value="1"/>
</dbReference>
<dbReference type="FunFam" id="2.40.30.10:FF:000015">
    <property type="entry name" value="Translation factor GUF1, mitochondrial"/>
    <property type="match status" value="1"/>
</dbReference>
<dbReference type="FunFam" id="3.30.70.2570:FF:000001">
    <property type="entry name" value="Translation factor GUF1, mitochondrial"/>
    <property type="match status" value="1"/>
</dbReference>
<dbReference type="FunFam" id="3.30.70.870:FF:000004">
    <property type="entry name" value="Translation factor GUF1, mitochondrial"/>
    <property type="match status" value="1"/>
</dbReference>
<dbReference type="Gene3D" id="3.30.70.240">
    <property type="match status" value="1"/>
</dbReference>
<dbReference type="Gene3D" id="3.30.70.2570">
    <property type="entry name" value="Elongation factor 4, C-terminal domain"/>
    <property type="match status" value="1"/>
</dbReference>
<dbReference type="Gene3D" id="3.30.70.870">
    <property type="entry name" value="Elongation Factor G (Translational Gtpase), domain 3"/>
    <property type="match status" value="1"/>
</dbReference>
<dbReference type="Gene3D" id="3.40.50.300">
    <property type="entry name" value="P-loop containing nucleotide triphosphate hydrolases"/>
    <property type="match status" value="1"/>
</dbReference>
<dbReference type="Gene3D" id="2.40.30.10">
    <property type="entry name" value="Translation factors"/>
    <property type="match status" value="1"/>
</dbReference>
<dbReference type="HAMAP" id="MF_00071">
    <property type="entry name" value="LepA"/>
    <property type="match status" value="1"/>
</dbReference>
<dbReference type="InterPro" id="IPR006297">
    <property type="entry name" value="EF-4"/>
</dbReference>
<dbReference type="InterPro" id="IPR035647">
    <property type="entry name" value="EFG_III/V"/>
</dbReference>
<dbReference type="InterPro" id="IPR000640">
    <property type="entry name" value="EFG_V-like"/>
</dbReference>
<dbReference type="InterPro" id="IPR004161">
    <property type="entry name" value="EFTu-like_2"/>
</dbReference>
<dbReference type="InterPro" id="IPR031157">
    <property type="entry name" value="G_TR_CS"/>
</dbReference>
<dbReference type="InterPro" id="IPR038363">
    <property type="entry name" value="LepA_C_sf"/>
</dbReference>
<dbReference type="InterPro" id="IPR013842">
    <property type="entry name" value="LepA_CTD"/>
</dbReference>
<dbReference type="InterPro" id="IPR035654">
    <property type="entry name" value="LepA_IV"/>
</dbReference>
<dbReference type="InterPro" id="IPR027417">
    <property type="entry name" value="P-loop_NTPase"/>
</dbReference>
<dbReference type="InterPro" id="IPR005225">
    <property type="entry name" value="Small_GTP-bd"/>
</dbReference>
<dbReference type="InterPro" id="IPR000795">
    <property type="entry name" value="T_Tr_GTP-bd_dom"/>
</dbReference>
<dbReference type="InterPro" id="IPR009000">
    <property type="entry name" value="Transl_B-barrel_sf"/>
</dbReference>
<dbReference type="NCBIfam" id="TIGR01393">
    <property type="entry name" value="lepA"/>
    <property type="match status" value="1"/>
</dbReference>
<dbReference type="NCBIfam" id="TIGR00231">
    <property type="entry name" value="small_GTP"/>
    <property type="match status" value="1"/>
</dbReference>
<dbReference type="PANTHER" id="PTHR43512:SF7">
    <property type="entry name" value="TRANSLATION FACTOR GUF1, MITOCHONDRIAL"/>
    <property type="match status" value="1"/>
</dbReference>
<dbReference type="PANTHER" id="PTHR43512">
    <property type="entry name" value="TRANSLATION FACTOR GUF1-RELATED"/>
    <property type="match status" value="1"/>
</dbReference>
<dbReference type="Pfam" id="PF00679">
    <property type="entry name" value="EFG_C"/>
    <property type="match status" value="1"/>
</dbReference>
<dbReference type="Pfam" id="PF00009">
    <property type="entry name" value="GTP_EFTU"/>
    <property type="match status" value="1"/>
</dbReference>
<dbReference type="Pfam" id="PF03144">
    <property type="entry name" value="GTP_EFTU_D2"/>
    <property type="match status" value="1"/>
</dbReference>
<dbReference type="Pfam" id="PF06421">
    <property type="entry name" value="LepA_C"/>
    <property type="match status" value="1"/>
</dbReference>
<dbReference type="PRINTS" id="PR00315">
    <property type="entry name" value="ELONGATNFCT"/>
</dbReference>
<dbReference type="SUPFAM" id="SSF54980">
    <property type="entry name" value="EF-G C-terminal domain-like"/>
    <property type="match status" value="2"/>
</dbReference>
<dbReference type="SUPFAM" id="SSF52540">
    <property type="entry name" value="P-loop containing nucleoside triphosphate hydrolases"/>
    <property type="match status" value="1"/>
</dbReference>
<dbReference type="SUPFAM" id="SSF50447">
    <property type="entry name" value="Translation proteins"/>
    <property type="match status" value="1"/>
</dbReference>
<dbReference type="PROSITE" id="PS00301">
    <property type="entry name" value="G_TR_1"/>
    <property type="match status" value="1"/>
</dbReference>
<dbReference type="PROSITE" id="PS51722">
    <property type="entry name" value="G_TR_2"/>
    <property type="match status" value="1"/>
</dbReference>
<protein>
    <recommendedName>
        <fullName evidence="1">Translation factor GUF1 homolog, mitochondrial</fullName>
        <ecNumber>3.6.5.-</ecNumber>
    </recommendedName>
    <alternativeName>
        <fullName evidence="1">Elongation factor 4 homolog</fullName>
        <shortName evidence="1">EF-4</shortName>
    </alternativeName>
    <alternativeName>
        <fullName evidence="1">GTPase GUF1 homolog</fullName>
    </alternativeName>
    <alternativeName>
        <fullName evidence="1">Ribosomal back-translocase</fullName>
    </alternativeName>
</protein>
<organism>
    <name type="scientific">Phytophthora infestans (strain T30-4)</name>
    <name type="common">Potato late blight agent</name>
    <dbReference type="NCBI Taxonomy" id="403677"/>
    <lineage>
        <taxon>Eukaryota</taxon>
        <taxon>Sar</taxon>
        <taxon>Stramenopiles</taxon>
        <taxon>Oomycota</taxon>
        <taxon>Peronosporales</taxon>
        <taxon>Peronosporaceae</taxon>
        <taxon>Phytophthora</taxon>
    </lineage>
</organism>
<keyword id="KW-0342">GTP-binding</keyword>
<keyword id="KW-0378">Hydrolase</keyword>
<keyword id="KW-0472">Membrane</keyword>
<keyword id="KW-0496">Mitochondrion</keyword>
<keyword id="KW-0999">Mitochondrion inner membrane</keyword>
<keyword id="KW-0547">Nucleotide-binding</keyword>
<keyword id="KW-0648">Protein biosynthesis</keyword>
<keyword id="KW-1185">Reference proteome</keyword>
<keyword id="KW-0809">Transit peptide</keyword>
<proteinExistence type="inferred from homology"/>
<evidence type="ECO:0000255" key="1">
    <source>
        <dbReference type="HAMAP-Rule" id="MF_03137"/>
    </source>
</evidence>
<evidence type="ECO:0000305" key="2"/>
<feature type="transit peptide" description="Mitochondrion" evidence="1">
    <location>
        <begin position="1"/>
        <end position="29"/>
    </location>
</feature>
<feature type="chain" id="PRO_0000402864" description="Translation factor GUF1 homolog, mitochondrial">
    <location>
        <begin position="30"/>
        <end position="656"/>
    </location>
</feature>
<feature type="domain" description="tr-type G">
    <location>
        <begin position="54"/>
        <end position="238"/>
    </location>
</feature>
<feature type="binding site" evidence="1">
    <location>
        <begin position="63"/>
        <end position="70"/>
    </location>
    <ligand>
        <name>GTP</name>
        <dbReference type="ChEBI" id="CHEBI:37565"/>
    </ligand>
</feature>
<feature type="binding site" evidence="1">
    <location>
        <begin position="131"/>
        <end position="135"/>
    </location>
    <ligand>
        <name>GTP</name>
        <dbReference type="ChEBI" id="CHEBI:37565"/>
    </ligand>
</feature>
<feature type="binding site" evidence="1">
    <location>
        <begin position="185"/>
        <end position="188"/>
    </location>
    <ligand>
        <name>GTP</name>
        <dbReference type="ChEBI" id="CHEBI:37565"/>
    </ligand>
</feature>
<gene>
    <name type="ORF">PITG_12454</name>
</gene>
<comment type="function">
    <text evidence="1">Promotes mitochondrial protein synthesis. May act as a fidelity factor of the translation reaction, by catalyzing a one-codon backward translocation of tRNAs on improperly translocated ribosomes. Binds to mitochondrial ribosomes in a GTP-dependent manner.</text>
</comment>
<comment type="catalytic activity">
    <reaction evidence="1">
        <text>GTP + H2O = GDP + phosphate + H(+)</text>
        <dbReference type="Rhea" id="RHEA:19669"/>
        <dbReference type="ChEBI" id="CHEBI:15377"/>
        <dbReference type="ChEBI" id="CHEBI:15378"/>
        <dbReference type="ChEBI" id="CHEBI:37565"/>
        <dbReference type="ChEBI" id="CHEBI:43474"/>
        <dbReference type="ChEBI" id="CHEBI:58189"/>
    </reaction>
</comment>
<comment type="subcellular location">
    <subcellularLocation>
        <location evidence="1">Mitochondrion inner membrane</location>
        <topology evidence="1">Peripheral membrane protein</topology>
        <orientation evidence="1">Matrix side</orientation>
    </subcellularLocation>
</comment>
<comment type="similarity">
    <text evidence="2">Belongs to the TRAFAC class translation factor GTPase superfamily. Classic translation factor GTPase family. LepA subfamily.</text>
</comment>